<reference key="1">
    <citation type="journal article" date="2009" name="BMC Genomics">
        <title>Conservation in the face of diversity: multistrain analysis of an intracellular bacterium.</title>
        <authorList>
            <person name="Dark M.J."/>
            <person name="Herndon D.R."/>
            <person name="Kappmeyer L.S."/>
            <person name="Gonzales M.P."/>
            <person name="Nordeen E."/>
            <person name="Palmer G.H."/>
            <person name="Knowles D.P. Jr."/>
            <person name="Brayton K.A."/>
        </authorList>
    </citation>
    <scope>NUCLEOTIDE SEQUENCE [LARGE SCALE GENOMIC DNA]</scope>
    <source>
        <strain>Florida</strain>
    </source>
</reference>
<protein>
    <recommendedName>
        <fullName evidence="1">5'-nucleotidase SurE</fullName>
        <ecNumber evidence="1">3.1.3.5</ecNumber>
    </recommendedName>
    <alternativeName>
        <fullName evidence="1">Nucleoside 5'-monophosphate phosphohydrolase</fullName>
    </alternativeName>
</protein>
<accession>B9KI89</accession>
<gene>
    <name evidence="1" type="primary">surE</name>
    <name type="ordered locus">AMF_331</name>
</gene>
<organism>
    <name type="scientific">Anaplasma marginale (strain Florida)</name>
    <dbReference type="NCBI Taxonomy" id="320483"/>
    <lineage>
        <taxon>Bacteria</taxon>
        <taxon>Pseudomonadati</taxon>
        <taxon>Pseudomonadota</taxon>
        <taxon>Alphaproteobacteria</taxon>
        <taxon>Rickettsiales</taxon>
        <taxon>Anaplasmataceae</taxon>
        <taxon>Anaplasma</taxon>
    </lineage>
</organism>
<keyword id="KW-0963">Cytoplasm</keyword>
<keyword id="KW-0378">Hydrolase</keyword>
<keyword id="KW-0479">Metal-binding</keyword>
<keyword id="KW-0547">Nucleotide-binding</keyword>
<keyword id="KW-1185">Reference proteome</keyword>
<comment type="function">
    <text evidence="1">Nucleotidase that shows phosphatase activity on nucleoside 5'-monophosphates.</text>
</comment>
<comment type="catalytic activity">
    <reaction evidence="1">
        <text>a ribonucleoside 5'-phosphate + H2O = a ribonucleoside + phosphate</text>
        <dbReference type="Rhea" id="RHEA:12484"/>
        <dbReference type="ChEBI" id="CHEBI:15377"/>
        <dbReference type="ChEBI" id="CHEBI:18254"/>
        <dbReference type="ChEBI" id="CHEBI:43474"/>
        <dbReference type="ChEBI" id="CHEBI:58043"/>
        <dbReference type="EC" id="3.1.3.5"/>
    </reaction>
</comment>
<comment type="cofactor">
    <cofactor evidence="1">
        <name>a divalent metal cation</name>
        <dbReference type="ChEBI" id="CHEBI:60240"/>
    </cofactor>
    <text evidence="1">Binds 1 divalent metal cation per subunit.</text>
</comment>
<comment type="subcellular location">
    <subcellularLocation>
        <location evidence="1">Cytoplasm</location>
    </subcellularLocation>
</comment>
<comment type="similarity">
    <text evidence="1">Belongs to the SurE nucleotidase family.</text>
</comment>
<dbReference type="EC" id="3.1.3.5" evidence="1"/>
<dbReference type="EMBL" id="CP001079">
    <property type="protein sequence ID" value="ACM49201.1"/>
    <property type="molecule type" value="Genomic_DNA"/>
</dbReference>
<dbReference type="RefSeq" id="WP_010267422.1">
    <property type="nucleotide sequence ID" value="NZ_AFMS01000133.1"/>
</dbReference>
<dbReference type="SMR" id="B9KI89"/>
<dbReference type="STRING" id="320483.AMF_331"/>
<dbReference type="GeneID" id="7398439"/>
<dbReference type="KEGG" id="amf:AMF_331"/>
<dbReference type="PATRIC" id="fig|320483.3.peg.391"/>
<dbReference type="eggNOG" id="COG0496">
    <property type="taxonomic scope" value="Bacteria"/>
</dbReference>
<dbReference type="HOGENOM" id="CLU_045192_1_2_5"/>
<dbReference type="Proteomes" id="UP000007307">
    <property type="component" value="Chromosome"/>
</dbReference>
<dbReference type="GO" id="GO:0005737">
    <property type="term" value="C:cytoplasm"/>
    <property type="evidence" value="ECO:0007669"/>
    <property type="project" value="UniProtKB-SubCell"/>
</dbReference>
<dbReference type="GO" id="GO:0008253">
    <property type="term" value="F:5'-nucleotidase activity"/>
    <property type="evidence" value="ECO:0007669"/>
    <property type="project" value="UniProtKB-UniRule"/>
</dbReference>
<dbReference type="GO" id="GO:0046872">
    <property type="term" value="F:metal ion binding"/>
    <property type="evidence" value="ECO:0007669"/>
    <property type="project" value="UniProtKB-UniRule"/>
</dbReference>
<dbReference type="GO" id="GO:0000166">
    <property type="term" value="F:nucleotide binding"/>
    <property type="evidence" value="ECO:0007669"/>
    <property type="project" value="UniProtKB-KW"/>
</dbReference>
<dbReference type="Gene3D" id="3.40.1210.10">
    <property type="entry name" value="Survival protein SurE-like phosphatase/nucleotidase"/>
    <property type="match status" value="1"/>
</dbReference>
<dbReference type="HAMAP" id="MF_00060">
    <property type="entry name" value="SurE"/>
    <property type="match status" value="1"/>
</dbReference>
<dbReference type="InterPro" id="IPR030048">
    <property type="entry name" value="SurE"/>
</dbReference>
<dbReference type="InterPro" id="IPR002828">
    <property type="entry name" value="SurE-like_Pase/nucleotidase"/>
</dbReference>
<dbReference type="InterPro" id="IPR036523">
    <property type="entry name" value="SurE-like_sf"/>
</dbReference>
<dbReference type="NCBIfam" id="TIGR00087">
    <property type="entry name" value="surE"/>
    <property type="match status" value="1"/>
</dbReference>
<dbReference type="PANTHER" id="PTHR30457">
    <property type="entry name" value="5'-NUCLEOTIDASE SURE"/>
    <property type="match status" value="1"/>
</dbReference>
<dbReference type="PANTHER" id="PTHR30457:SF0">
    <property type="entry name" value="PHOSPHATASE, PUTATIVE (AFU_ORTHOLOGUE AFUA_4G01070)-RELATED"/>
    <property type="match status" value="1"/>
</dbReference>
<dbReference type="Pfam" id="PF01975">
    <property type="entry name" value="SurE"/>
    <property type="match status" value="1"/>
</dbReference>
<dbReference type="SUPFAM" id="SSF64167">
    <property type="entry name" value="SurE-like"/>
    <property type="match status" value="1"/>
</dbReference>
<feature type="chain" id="PRO_1000196582" description="5'-nucleotidase SurE">
    <location>
        <begin position="1"/>
        <end position="261"/>
    </location>
</feature>
<feature type="binding site" evidence="1">
    <location>
        <position position="8"/>
    </location>
    <ligand>
        <name>a divalent metal cation</name>
        <dbReference type="ChEBI" id="CHEBI:60240"/>
    </ligand>
</feature>
<feature type="binding site" evidence="1">
    <location>
        <position position="9"/>
    </location>
    <ligand>
        <name>a divalent metal cation</name>
        <dbReference type="ChEBI" id="CHEBI:60240"/>
    </ligand>
</feature>
<feature type="binding site" evidence="1">
    <location>
        <position position="40"/>
    </location>
    <ligand>
        <name>a divalent metal cation</name>
        <dbReference type="ChEBI" id="CHEBI:60240"/>
    </ligand>
</feature>
<feature type="binding site" evidence="1">
    <location>
        <position position="94"/>
    </location>
    <ligand>
        <name>a divalent metal cation</name>
        <dbReference type="ChEBI" id="CHEBI:60240"/>
    </ligand>
</feature>
<proteinExistence type="inferred from homology"/>
<sequence length="261" mass="28354">MRVLLTNDDGFDSVGMRVLRDVVSGHFAEVWVSAPARDCSAASRALSVRTPIKTHMRGEREFVVHGTPADSAVIGICEMTSTGKRPDLVISGINYGANTGFTVPYSGTIAAAAAAFDIGVPAIAISQQYNGKRCDNNVETSWQNSRKSVMALVSRLLRDTMWHGKCIMSINVPYSDVQGVKFAGHSCDDGHIKWDGPSMERREITSGDGRCVSYVFDDMRSPNSNDNASDTQLLEQGYIVVTPIGHSMTDHATLDKYCGLQ</sequence>
<name>SURE_ANAMF</name>
<evidence type="ECO:0000255" key="1">
    <source>
        <dbReference type="HAMAP-Rule" id="MF_00060"/>
    </source>
</evidence>